<evidence type="ECO:0000250" key="1">
    <source>
        <dbReference type="UniProtKB" id="P23415"/>
    </source>
</evidence>
<evidence type="ECO:0000250" key="2">
    <source>
        <dbReference type="UniProtKB" id="P24524"/>
    </source>
</evidence>
<evidence type="ECO:0000250" key="3">
    <source>
        <dbReference type="UniProtKB" id="Q91XP5"/>
    </source>
</evidence>
<evidence type="ECO:0000255" key="4"/>
<evidence type="ECO:0000269" key="5">
    <source>
    </source>
</evidence>
<evidence type="ECO:0000269" key="6">
    <source>
    </source>
</evidence>
<evidence type="ECO:0000303" key="7">
    <source>
    </source>
</evidence>
<evidence type="ECO:0000305" key="8"/>
<evidence type="ECO:0007744" key="9">
    <source>
        <dbReference type="PDB" id="5CFB"/>
    </source>
</evidence>
<evidence type="ECO:0007829" key="10">
    <source>
        <dbReference type="PDB" id="5TIN"/>
    </source>
</evidence>
<evidence type="ECO:0007829" key="11">
    <source>
        <dbReference type="PDB" id="9BWB"/>
    </source>
</evidence>
<evidence type="ECO:0007829" key="12">
    <source>
        <dbReference type="PDB" id="9BWC"/>
    </source>
</evidence>
<evidence type="ECO:0007829" key="13">
    <source>
        <dbReference type="PDB" id="9BWJ"/>
    </source>
</evidence>
<organism>
    <name type="scientific">Homo sapiens</name>
    <name type="common">Human</name>
    <dbReference type="NCBI Taxonomy" id="9606"/>
    <lineage>
        <taxon>Eukaryota</taxon>
        <taxon>Metazoa</taxon>
        <taxon>Chordata</taxon>
        <taxon>Craniata</taxon>
        <taxon>Vertebrata</taxon>
        <taxon>Euteleostomi</taxon>
        <taxon>Mammalia</taxon>
        <taxon>Eutheria</taxon>
        <taxon>Euarchontoglires</taxon>
        <taxon>Primates</taxon>
        <taxon>Haplorrhini</taxon>
        <taxon>Catarrhini</taxon>
        <taxon>Hominidae</taxon>
        <taxon>Homo</taxon>
    </lineage>
</organism>
<name>GLRA3_HUMAN</name>
<sequence>MAHVRHFRTLVSGFYFWEAALLLSLVATKETDSARSRSAPMSPSDFLDKLMGRTSGYDARIRPNFKGPPVNVTCNIFINSFGSIAETTMDYRVNIFLRQKWNDPRLAYSEYPDDSLDLDPSMLDSIWKPDLFFANEKGANFHEVTTDNKLLRIFKNGNVLYSIRLTLTLSCPMDLKNFPMDVQTCIMQLESFGYTMNDLIFEWQDEAPVQVAEGLTLPQFLLKEEKDLRYCTKHYNTGKFTCIEVRFHLERQMGYYLIQMYIPSLLIVILSWVSFWINMDAAPARVALGITTVLTMTTQSSGSRASLPKVSYVKAIDIWMAVCLLFVFSALLEYAAVNFVSRQHKELLRFRRKRKNKTEAFALEKFYRFSDMDDEVRESRFSFTAYGMGPCLQAKDGMTPKGPNHPVQVMPKSPDEMRKVFIDRAKKIDTISRACFPLAFLIFNIFYWVIYKILRHEDIHQQQD</sequence>
<accession>O75311</accession>
<accession>D3DP44</accession>
<accession>O75816</accession>
<accession>Q5D0E3</accession>
<proteinExistence type="evidence at protein level"/>
<comment type="function">
    <text evidence="2 3 5 6">Glycine receptors are ligand-gated chloride channels. Channel opening is triggered by extracellular glycine (PubMed:26416729, PubMed:9677400). Channel characteristics depend on the subunit composition; heteropentameric channels display faster channel closure (By similarity). Plays an important role in the down-regulation of neuronal excitability (By similarity). Contributes to the generation of inhibitory postsynaptic currents (By similarity). Contributes to increased pain perception in response to increased prostaglandin E2 levels (By similarity). Plays a role in cellular responses to ethanol (By similarity).</text>
</comment>
<comment type="catalytic activity">
    <reaction evidence="5 6">
        <text>chloride(in) = chloride(out)</text>
        <dbReference type="Rhea" id="RHEA:29823"/>
        <dbReference type="ChEBI" id="CHEBI:17996"/>
    </reaction>
</comment>
<comment type="subunit">
    <text evidence="2 5">Homopentamer (in vitro) (PubMed:26416729). Heteropentamer composed of GLRA3 and GLRB. Both homopentamers and heteropentamers form functional ion channels, but their characteristics are subtly different (By similarity).</text>
</comment>
<comment type="interaction">
    <interactant intactId="EBI-16357053">
        <id>O75311</id>
    </interactant>
    <interactant intactId="EBI-2556480">
        <id>Q14681</id>
        <label>KCTD2</label>
    </interactant>
    <organismsDiffer>false</organismsDiffer>
    <experiments>3</experiments>
</comment>
<comment type="subcellular location">
    <subcellularLocation>
        <location evidence="2">Postsynaptic cell membrane</location>
        <topology evidence="8">Multi-pass membrane protein</topology>
    </subcellularLocation>
    <subcellularLocation>
        <location evidence="2">Perikaryon</location>
    </subcellularLocation>
    <subcellularLocation>
        <location evidence="2">Cell projection</location>
        <location evidence="2">Dendrite</location>
    </subcellularLocation>
    <subcellularLocation>
        <location evidence="2">Synapse</location>
    </subcellularLocation>
    <subcellularLocation>
        <location evidence="5 6">Cell membrane</location>
        <topology evidence="5">Multi-pass membrane protein</topology>
    </subcellularLocation>
    <text evidence="2">Partially colocalizes with GPHN that is known to mediate receptor clustering at postsynaptic membranes.</text>
</comment>
<comment type="alternative products">
    <event type="alternative splicing"/>
    <isoform>
        <id>O75311-1</id>
        <name>Alpha-3L</name>
        <sequence type="displayed"/>
    </isoform>
    <isoform>
        <id>O75311-2</id>
        <name>Alpha-3K</name>
        <sequence type="described" ref="VSP_000084"/>
    </isoform>
</comment>
<comment type="tissue specificity">
    <text evidence="6">Widely distributed throughout the central nervous system.</text>
</comment>
<comment type="domain">
    <text evidence="5 8">The N-terminal domain carries structural determinants essential for agonist and antagonist binding. The channel pore is formed by pentameric assembly of the second transmembrane domain from all five subunits (PubMed:26416729). The cytoplasmic loop is an important determinant of channel inactivation kinetics.</text>
</comment>
<comment type="PTM">
    <text evidence="2">Phosphorylated by PKA; this causes down-regulation of channel activity.</text>
</comment>
<comment type="miscellaneous">
    <text evidence="5">The alpha subunit binds strychnine.</text>
</comment>
<comment type="similarity">
    <text evidence="8">Belongs to the ligand-gated ion channel (TC 1.A.9) family. Glycine receptor (TC 1.A.9.3) subfamily. GLRA3 sub-subfamily.</text>
</comment>
<protein>
    <recommendedName>
        <fullName>Glycine receptor subunit alpha-3</fullName>
    </recommendedName>
</protein>
<reference key="1">
    <citation type="journal article" date="1998" name="J. Biol. Chem.">
        <title>The human glycine receptor subunit alpha3. GLRA3 gene structure, chromosomal localization, and functional characterization of alternative transcripts.</title>
        <authorList>
            <person name="Nikolic Z."/>
            <person name="Laube B."/>
            <person name="Weber R.G."/>
            <person name="Lichter P."/>
            <person name="Kioschis P."/>
            <person name="Poustka A."/>
            <person name="Muelhardt C."/>
            <person name="Becker C.-M."/>
        </authorList>
    </citation>
    <scope>NUCLEOTIDE SEQUENCE [GENOMIC DNA / MRNA] (ISOFORMS ALPHA-3K AND ALPHA-3L)</scope>
    <scope>FUNCTION</scope>
    <scope>TRANSPORTER ACTIVITY</scope>
    <scope>SUBCELLULAR LOCATION</scope>
    <scope>TISSUE SPECIFICITY</scope>
    <source>
        <tissue>Fetal brain</tissue>
    </source>
</reference>
<reference key="2">
    <citation type="submission" date="2005-09" db="EMBL/GenBank/DDBJ databases">
        <authorList>
            <person name="Mural R.J."/>
            <person name="Istrail S."/>
            <person name="Sutton G.G."/>
            <person name="Florea L."/>
            <person name="Halpern A.L."/>
            <person name="Mobarry C.M."/>
            <person name="Lippert R."/>
            <person name="Walenz B."/>
            <person name="Shatkay H."/>
            <person name="Dew I."/>
            <person name="Miller J.R."/>
            <person name="Flanigan M.J."/>
            <person name="Edwards N.J."/>
            <person name="Bolanos R."/>
            <person name="Fasulo D."/>
            <person name="Halldorsson B.V."/>
            <person name="Hannenhalli S."/>
            <person name="Turner R."/>
            <person name="Yooseph S."/>
            <person name="Lu F."/>
            <person name="Nusskern D.R."/>
            <person name="Shue B.C."/>
            <person name="Zheng X.H."/>
            <person name="Zhong F."/>
            <person name="Delcher A.L."/>
            <person name="Huson D.H."/>
            <person name="Kravitz S.A."/>
            <person name="Mouchard L."/>
            <person name="Reinert K."/>
            <person name="Remington K.A."/>
            <person name="Clark A.G."/>
            <person name="Waterman M.S."/>
            <person name="Eichler E.E."/>
            <person name="Adams M.D."/>
            <person name="Hunkapiller M.W."/>
            <person name="Myers E.W."/>
            <person name="Venter J.C."/>
        </authorList>
    </citation>
    <scope>NUCLEOTIDE SEQUENCE [LARGE SCALE GENOMIC DNA]</scope>
</reference>
<reference key="3">
    <citation type="journal article" date="2004" name="Genome Res.">
        <title>The status, quality, and expansion of the NIH full-length cDNA project: the Mammalian Gene Collection (MGC).</title>
        <authorList>
            <consortium name="The MGC Project Team"/>
        </authorList>
    </citation>
    <scope>NUCLEOTIDE SEQUENCE [LARGE SCALE MRNA] (ISOFORM ALPHA-3L)</scope>
    <source>
        <tissue>Brain</tissue>
    </source>
</reference>
<reference evidence="9" key="4">
    <citation type="journal article" date="2015" name="Nature">
        <title>Crystal structure of human glycine receptor-alpha3 bound to antagonist strychnine.</title>
        <authorList>
            <person name="Huang X."/>
            <person name="Chen H."/>
            <person name="Michelsen K."/>
            <person name="Schneider S."/>
            <person name="Shaffer P.L."/>
        </authorList>
    </citation>
    <scope>X-RAY CRYSTALLOGRAPHY (3.04 ANGSTROMS) OF 34-342 AND 419-460 IN COMPLEX WITH STRYCHNINE</scope>
    <scope>FUNCTION</scope>
    <scope>TRANSPORTER ACTIVITY</scope>
    <scope>SUBUNIT</scope>
    <scope>SUBCELLULAR LOCATION</scope>
    <scope>TOPOLOGY</scope>
    <scope>DISULFIDE BONDS</scope>
    <scope>GLYCOSYLATION AT ASN-71</scope>
    <scope>DOMAIN</scope>
</reference>
<keyword id="KW-0002">3D-structure</keyword>
<keyword id="KW-0025">Alternative splicing</keyword>
<keyword id="KW-1003">Cell membrane</keyword>
<keyword id="KW-0966">Cell projection</keyword>
<keyword id="KW-0868">Chloride</keyword>
<keyword id="KW-0869">Chloride channel</keyword>
<keyword id="KW-1015">Disulfide bond</keyword>
<keyword id="KW-0325">Glycoprotein</keyword>
<keyword id="KW-0407">Ion channel</keyword>
<keyword id="KW-0406">Ion transport</keyword>
<keyword id="KW-1071">Ligand-gated ion channel</keyword>
<keyword id="KW-0472">Membrane</keyword>
<keyword id="KW-0479">Metal-binding</keyword>
<keyword id="KW-0597">Phosphoprotein</keyword>
<keyword id="KW-0628">Postsynaptic cell membrane</keyword>
<keyword id="KW-1267">Proteomics identification</keyword>
<keyword id="KW-0675">Receptor</keyword>
<keyword id="KW-1185">Reference proteome</keyword>
<keyword id="KW-0732">Signal</keyword>
<keyword id="KW-0770">Synapse</keyword>
<keyword id="KW-0812">Transmembrane</keyword>
<keyword id="KW-1133">Transmembrane helix</keyword>
<keyword id="KW-0813">Transport</keyword>
<keyword id="KW-0862">Zinc</keyword>
<dbReference type="EMBL" id="AF017724">
    <property type="protein sequence ID" value="AAC39919.1"/>
    <property type="molecule type" value="Genomic_DNA"/>
</dbReference>
<dbReference type="EMBL" id="AF017715">
    <property type="protein sequence ID" value="AAC39919.1"/>
    <property type="status" value="JOINED"/>
    <property type="molecule type" value="Genomic_DNA"/>
</dbReference>
<dbReference type="EMBL" id="AF017716">
    <property type="protein sequence ID" value="AAC39919.1"/>
    <property type="status" value="JOINED"/>
    <property type="molecule type" value="Genomic_DNA"/>
</dbReference>
<dbReference type="EMBL" id="AF017717">
    <property type="protein sequence ID" value="AAC39919.1"/>
    <property type="status" value="JOINED"/>
    <property type="molecule type" value="Genomic_DNA"/>
</dbReference>
<dbReference type="EMBL" id="AF017718">
    <property type="protein sequence ID" value="AAC39919.1"/>
    <property type="status" value="JOINED"/>
    <property type="molecule type" value="Genomic_DNA"/>
</dbReference>
<dbReference type="EMBL" id="AF017719">
    <property type="protein sequence ID" value="AAC39919.1"/>
    <property type="status" value="JOINED"/>
    <property type="molecule type" value="Genomic_DNA"/>
</dbReference>
<dbReference type="EMBL" id="AF017720">
    <property type="protein sequence ID" value="AAC39919.1"/>
    <property type="status" value="JOINED"/>
    <property type="molecule type" value="Genomic_DNA"/>
</dbReference>
<dbReference type="EMBL" id="AF017721">
    <property type="protein sequence ID" value="AAC39919.1"/>
    <property type="status" value="JOINED"/>
    <property type="molecule type" value="Genomic_DNA"/>
</dbReference>
<dbReference type="EMBL" id="AF017722">
    <property type="protein sequence ID" value="AAC39919.1"/>
    <property type="status" value="JOINED"/>
    <property type="molecule type" value="Genomic_DNA"/>
</dbReference>
<dbReference type="EMBL" id="AF017723">
    <property type="protein sequence ID" value="AAC39919.1"/>
    <property type="status" value="JOINED"/>
    <property type="molecule type" value="Genomic_DNA"/>
</dbReference>
<dbReference type="EMBL" id="U93917">
    <property type="protein sequence ID" value="AAC39917.1"/>
    <property type="molecule type" value="mRNA"/>
</dbReference>
<dbReference type="EMBL" id="CH471056">
    <property type="protein sequence ID" value="EAX04730.1"/>
    <property type="molecule type" value="Genomic_DNA"/>
</dbReference>
<dbReference type="EMBL" id="CH471056">
    <property type="protein sequence ID" value="EAX04732.1"/>
    <property type="molecule type" value="Genomic_DNA"/>
</dbReference>
<dbReference type="EMBL" id="BC036086">
    <property type="protein sequence ID" value="AAH36086.1"/>
    <property type="molecule type" value="mRNA"/>
</dbReference>
<dbReference type="CCDS" id="CCDS3822.1">
    <molecule id="O75311-1"/>
</dbReference>
<dbReference type="CCDS" id="CCDS43283.1">
    <molecule id="O75311-2"/>
</dbReference>
<dbReference type="RefSeq" id="NP_001036008.1">
    <molecule id="O75311-2"/>
    <property type="nucleotide sequence ID" value="NM_001042543.3"/>
</dbReference>
<dbReference type="RefSeq" id="NP_006520.2">
    <molecule id="O75311-1"/>
    <property type="nucleotide sequence ID" value="NM_006529.4"/>
</dbReference>
<dbReference type="PDB" id="5CFB">
    <property type="method" value="X-ray"/>
    <property type="resolution" value="3.04 A"/>
    <property type="chains" value="A/B/C/D/E=34-342, A/B/C/D/E=419-460"/>
</dbReference>
<dbReference type="PDB" id="5TIN">
    <property type="method" value="X-ray"/>
    <property type="resolution" value="2.61 A"/>
    <property type="chains" value="A/B/C/D/E=34-342, A/B/C/D/E=419-460"/>
</dbReference>
<dbReference type="PDB" id="5TIO">
    <property type="method" value="X-ray"/>
    <property type="resolution" value="3.25 A"/>
    <property type="chains" value="A/B/C/D/E=34-342, A/B/C/D/E=419-460"/>
</dbReference>
<dbReference type="PDB" id="5VDH">
    <property type="method" value="X-ray"/>
    <property type="resolution" value="2.85 A"/>
    <property type="chains" value="A/B/C/D/E=34-342, A/B/C/D/E=419-460"/>
</dbReference>
<dbReference type="PDB" id="5VDI">
    <property type="method" value="X-ray"/>
    <property type="resolution" value="3.10 A"/>
    <property type="chains" value="A/B/C/D/E=34-342, A/B/C/D/E=419-460"/>
</dbReference>
<dbReference type="PDB" id="9BU2">
    <property type="method" value="EM"/>
    <property type="resolution" value="2.87 A"/>
    <property type="chains" value="A/B/C/D/E=1-464"/>
</dbReference>
<dbReference type="PDB" id="9BU3">
    <property type="method" value="EM"/>
    <property type="resolution" value="2.80 A"/>
    <property type="chains" value="A/B/C/D/E=1-464"/>
</dbReference>
<dbReference type="PDB" id="9BVH">
    <property type="method" value="EM"/>
    <property type="resolution" value="2.58 A"/>
    <property type="chains" value="A/B/C/D/E=1-464"/>
</dbReference>
<dbReference type="PDB" id="9BVJ">
    <property type="method" value="EM"/>
    <property type="resolution" value="2.80 A"/>
    <property type="chains" value="A/B/C/D/E=1-464"/>
</dbReference>
<dbReference type="PDB" id="9BWB">
    <property type="method" value="EM"/>
    <property type="resolution" value="2.21 A"/>
    <property type="chains" value="A/B/C/D/E=1-464"/>
</dbReference>
<dbReference type="PDB" id="9BWC">
    <property type="method" value="EM"/>
    <property type="resolution" value="2.19 A"/>
    <property type="chains" value="A/B/C/D/E=1-464"/>
</dbReference>
<dbReference type="PDB" id="9BWE">
    <property type="method" value="EM"/>
    <property type="resolution" value="3.07 A"/>
    <property type="chains" value="A/B/C/D/E=1-464"/>
</dbReference>
<dbReference type="PDB" id="9BWG">
    <property type="method" value="EM"/>
    <property type="resolution" value="2.59 A"/>
    <property type="chains" value="A/B/C/D/E=1-464"/>
</dbReference>
<dbReference type="PDB" id="9BWJ">
    <property type="method" value="EM"/>
    <property type="resolution" value="2.21 A"/>
    <property type="chains" value="A/B/C/D/E=1-464"/>
</dbReference>
<dbReference type="PDB" id="9BZP">
    <property type="method" value="EM"/>
    <property type="resolution" value="2.88 A"/>
    <property type="chains" value="A/B/C/D/E=1-464"/>
</dbReference>
<dbReference type="PDBsum" id="5CFB"/>
<dbReference type="PDBsum" id="5TIN"/>
<dbReference type="PDBsum" id="5TIO"/>
<dbReference type="PDBsum" id="5VDH"/>
<dbReference type="PDBsum" id="5VDI"/>
<dbReference type="PDBsum" id="9BU2"/>
<dbReference type="PDBsum" id="9BU3"/>
<dbReference type="PDBsum" id="9BVH"/>
<dbReference type="PDBsum" id="9BVJ"/>
<dbReference type="PDBsum" id="9BWB"/>
<dbReference type="PDBsum" id="9BWC"/>
<dbReference type="PDBsum" id="9BWE"/>
<dbReference type="PDBsum" id="9BWG"/>
<dbReference type="PDBsum" id="9BWJ"/>
<dbReference type="PDBsum" id="9BZP"/>
<dbReference type="EMDB" id="EMD-44899"/>
<dbReference type="EMDB" id="EMD-44900"/>
<dbReference type="EMDB" id="EMD-44933"/>
<dbReference type="EMDB" id="EMD-44934"/>
<dbReference type="EMDB" id="EMD-44963"/>
<dbReference type="EMDB" id="EMD-44964"/>
<dbReference type="EMDB" id="EMD-44970"/>
<dbReference type="EMDB" id="EMD-44974"/>
<dbReference type="EMDB" id="EMD-44976"/>
<dbReference type="EMDB" id="EMD-45073"/>
<dbReference type="SMR" id="O75311"/>
<dbReference type="BioGRID" id="113705">
    <property type="interactions" value="9"/>
</dbReference>
<dbReference type="ComplexPortal" id="CPX-7845">
    <property type="entry name" value="Glycine receptor complex, GLRA3-GLRB"/>
</dbReference>
<dbReference type="DIP" id="DIP-61773N"/>
<dbReference type="FunCoup" id="O75311">
    <property type="interactions" value="1041"/>
</dbReference>
<dbReference type="IntAct" id="O75311">
    <property type="interactions" value="9"/>
</dbReference>
<dbReference type="STRING" id="9606.ENSP00000274093"/>
<dbReference type="BindingDB" id="O75311"/>
<dbReference type="ChEMBL" id="CHEMBL1075092"/>
<dbReference type="DrugBank" id="DB09061">
    <property type="generic name" value="Cannabidiol"/>
</dbReference>
<dbReference type="DrugBank" id="DB06741">
    <property type="generic name" value="Gavestinel"/>
</dbReference>
<dbReference type="DrugBank" id="DB06743">
    <property type="generic name" value="Ginkgolide A"/>
</dbReference>
<dbReference type="DrugBank" id="DB00145">
    <property type="generic name" value="Glycine"/>
</dbReference>
<dbReference type="DrugBank" id="DB00431">
    <property type="generic name" value="Lindane"/>
</dbReference>
<dbReference type="DrugBank" id="DB14009">
    <property type="generic name" value="Medical Cannabis"/>
</dbReference>
<dbReference type="DrugBank" id="DB14011">
    <property type="generic name" value="Nabiximols"/>
</dbReference>
<dbReference type="DrugBank" id="DB00466">
    <property type="generic name" value="Picrotoxin"/>
</dbReference>
<dbReference type="DrugBank" id="DB15954">
    <property type="generic name" value="Strychnine"/>
</dbReference>
<dbReference type="DrugBank" id="DB01956">
    <property type="generic name" value="Taurine"/>
</dbReference>
<dbReference type="DrugBank" id="DB11582">
    <property type="generic name" value="Thiocolchicoside"/>
</dbReference>
<dbReference type="DrugCentral" id="O75311"/>
<dbReference type="GuidetoPHARMACOLOGY" id="425"/>
<dbReference type="TCDB" id="1.A.9.3.1">
    <property type="family name" value="the neurotransmitter receptor, cys loop, ligand-gated ion channel (lic) family"/>
</dbReference>
<dbReference type="GlyCosmos" id="O75311">
    <property type="glycosylation" value="1 site, No reported glycans"/>
</dbReference>
<dbReference type="GlyGen" id="O75311">
    <property type="glycosylation" value="4 sites, 1 O-linked glycan (3 sites)"/>
</dbReference>
<dbReference type="iPTMnet" id="O75311"/>
<dbReference type="PhosphoSitePlus" id="O75311"/>
<dbReference type="BioMuta" id="GLRA3"/>
<dbReference type="MassIVE" id="O75311"/>
<dbReference type="PaxDb" id="9606-ENSP00000274093"/>
<dbReference type="PeptideAtlas" id="O75311"/>
<dbReference type="ProteomicsDB" id="49887">
    <molecule id="O75311-1"/>
</dbReference>
<dbReference type="ProteomicsDB" id="49888">
    <molecule id="O75311-2"/>
</dbReference>
<dbReference type="ABCD" id="O75311">
    <property type="antibodies" value="3 sequenced antibodies"/>
</dbReference>
<dbReference type="Antibodypedia" id="28583">
    <property type="antibodies" value="99 antibodies from 22 providers"/>
</dbReference>
<dbReference type="DNASU" id="8001"/>
<dbReference type="Ensembl" id="ENST00000274093.8">
    <molecule id="O75311-1"/>
    <property type="protein sequence ID" value="ENSP00000274093.3"/>
    <property type="gene ID" value="ENSG00000145451.13"/>
</dbReference>
<dbReference type="Ensembl" id="ENST00000340217.5">
    <molecule id="O75311-2"/>
    <property type="protein sequence ID" value="ENSP00000345284.5"/>
    <property type="gene ID" value="ENSG00000145451.13"/>
</dbReference>
<dbReference type="GeneID" id="8001"/>
<dbReference type="KEGG" id="hsa:8001"/>
<dbReference type="MANE-Select" id="ENST00000274093.8">
    <property type="protein sequence ID" value="ENSP00000274093.3"/>
    <property type="RefSeq nucleotide sequence ID" value="NM_006529.4"/>
    <property type="RefSeq protein sequence ID" value="NP_006520.2"/>
</dbReference>
<dbReference type="UCSC" id="uc003ity.3">
    <molecule id="O75311-1"/>
    <property type="organism name" value="human"/>
</dbReference>
<dbReference type="AGR" id="HGNC:4328"/>
<dbReference type="CTD" id="8001"/>
<dbReference type="DisGeNET" id="8001"/>
<dbReference type="GeneCards" id="GLRA3"/>
<dbReference type="HGNC" id="HGNC:4328">
    <property type="gene designation" value="GLRA3"/>
</dbReference>
<dbReference type="HPA" id="ENSG00000145451">
    <property type="expression patterns" value="Group enriched (brain, breast)"/>
</dbReference>
<dbReference type="MIM" id="600421">
    <property type="type" value="gene"/>
</dbReference>
<dbReference type="neXtProt" id="NX_O75311"/>
<dbReference type="OpenTargets" id="ENSG00000145451"/>
<dbReference type="PharmGKB" id="PA28729"/>
<dbReference type="VEuPathDB" id="HostDB:ENSG00000145451"/>
<dbReference type="eggNOG" id="KOG3644">
    <property type="taxonomic scope" value="Eukaryota"/>
</dbReference>
<dbReference type="GeneTree" id="ENSGT00940000158368"/>
<dbReference type="HOGENOM" id="CLU_010920_1_4_1"/>
<dbReference type="InParanoid" id="O75311"/>
<dbReference type="OMA" id="DIWLVVC"/>
<dbReference type="OrthoDB" id="407674at2759"/>
<dbReference type="PAN-GO" id="O75311">
    <property type="GO annotations" value="13 GO annotations based on evolutionary models"/>
</dbReference>
<dbReference type="PhylomeDB" id="O75311"/>
<dbReference type="TreeFam" id="TF315453"/>
<dbReference type="PathwayCommons" id="O75311"/>
<dbReference type="Reactome" id="R-HSA-112314">
    <property type="pathway name" value="Neurotransmitter receptors and postsynaptic signal transmission"/>
</dbReference>
<dbReference type="SignaLink" id="O75311"/>
<dbReference type="SIGNOR" id="O75311"/>
<dbReference type="BioGRID-ORCS" id="8001">
    <property type="hits" value="7 hits in 1155 CRISPR screens"/>
</dbReference>
<dbReference type="ChiTaRS" id="GLRA3">
    <property type="organism name" value="human"/>
</dbReference>
<dbReference type="EvolutionaryTrace" id="O75311"/>
<dbReference type="GeneWiki" id="GLRA3"/>
<dbReference type="GenomeRNAi" id="8001"/>
<dbReference type="Pharos" id="O75311">
    <property type="development level" value="Tchem"/>
</dbReference>
<dbReference type="PRO" id="PR:O75311"/>
<dbReference type="Proteomes" id="UP000005640">
    <property type="component" value="Chromosome 4"/>
</dbReference>
<dbReference type="RNAct" id="O75311">
    <property type="molecule type" value="protein"/>
</dbReference>
<dbReference type="Bgee" id="ENSG00000145451">
    <property type="expression patterns" value="Expressed in male germ line stem cell (sensu Vertebrata) in testis and 59 other cell types or tissues"/>
</dbReference>
<dbReference type="GO" id="GO:0030425">
    <property type="term" value="C:dendrite"/>
    <property type="evidence" value="ECO:0007669"/>
    <property type="project" value="UniProtKB-SubCell"/>
</dbReference>
<dbReference type="GO" id="GO:0016935">
    <property type="term" value="C:glycine-gated chloride channel complex"/>
    <property type="evidence" value="ECO:0000314"/>
    <property type="project" value="UniProtKB"/>
</dbReference>
<dbReference type="GO" id="GO:0098690">
    <property type="term" value="C:glycinergic synapse"/>
    <property type="evidence" value="ECO:0007669"/>
    <property type="project" value="Ensembl"/>
</dbReference>
<dbReference type="GO" id="GO:0043231">
    <property type="term" value="C:intracellular membrane-bounded organelle"/>
    <property type="evidence" value="ECO:0000314"/>
    <property type="project" value="HPA"/>
</dbReference>
<dbReference type="GO" id="GO:0043204">
    <property type="term" value="C:perikaryon"/>
    <property type="evidence" value="ECO:0007669"/>
    <property type="project" value="UniProtKB-SubCell"/>
</dbReference>
<dbReference type="GO" id="GO:0005886">
    <property type="term" value="C:plasma membrane"/>
    <property type="evidence" value="ECO:0000314"/>
    <property type="project" value="HPA"/>
</dbReference>
<dbReference type="GO" id="GO:0045211">
    <property type="term" value="C:postsynaptic membrane"/>
    <property type="evidence" value="ECO:0007669"/>
    <property type="project" value="UniProtKB-SubCell"/>
</dbReference>
<dbReference type="GO" id="GO:0042734">
    <property type="term" value="C:presynaptic membrane"/>
    <property type="evidence" value="ECO:0007669"/>
    <property type="project" value="Ensembl"/>
</dbReference>
<dbReference type="GO" id="GO:0016934">
    <property type="term" value="F:extracellularly glycine-gated chloride channel activity"/>
    <property type="evidence" value="ECO:0000314"/>
    <property type="project" value="UniProtKB"/>
</dbReference>
<dbReference type="GO" id="GO:0016594">
    <property type="term" value="F:glycine binding"/>
    <property type="evidence" value="ECO:0007669"/>
    <property type="project" value="InterPro"/>
</dbReference>
<dbReference type="GO" id="GO:0022852">
    <property type="term" value="F:glycine-gated chloride ion channel activity"/>
    <property type="evidence" value="ECO:0000314"/>
    <property type="project" value="UniProtKB"/>
</dbReference>
<dbReference type="GO" id="GO:0046872">
    <property type="term" value="F:metal ion binding"/>
    <property type="evidence" value="ECO:0007669"/>
    <property type="project" value="UniProtKB-KW"/>
</dbReference>
<dbReference type="GO" id="GO:0004888">
    <property type="term" value="F:transmembrane signaling receptor activity"/>
    <property type="evidence" value="ECO:0007669"/>
    <property type="project" value="InterPro"/>
</dbReference>
<dbReference type="GO" id="GO:1902476">
    <property type="term" value="P:chloride transmembrane transport"/>
    <property type="evidence" value="ECO:0000314"/>
    <property type="project" value="UniProtKB"/>
</dbReference>
<dbReference type="GO" id="GO:0099171">
    <property type="term" value="P:presynaptic modulation of chemical synaptic transmission"/>
    <property type="evidence" value="ECO:0007669"/>
    <property type="project" value="Ensembl"/>
</dbReference>
<dbReference type="GO" id="GO:0051260">
    <property type="term" value="P:protein homooligomerization"/>
    <property type="evidence" value="ECO:0000314"/>
    <property type="project" value="UniProtKB"/>
</dbReference>
<dbReference type="CDD" id="cd19009">
    <property type="entry name" value="LGIC_ECD_GlyR_alpha"/>
    <property type="match status" value="1"/>
</dbReference>
<dbReference type="CDD" id="cd19060">
    <property type="entry name" value="LGIC_TM_GlyR_alpha"/>
    <property type="match status" value="1"/>
</dbReference>
<dbReference type="FunFam" id="2.70.170.10:FF:000002">
    <property type="entry name" value="Glycine receptor alpha 1 subunit"/>
    <property type="match status" value="1"/>
</dbReference>
<dbReference type="FunFam" id="1.20.58.390:FF:000003">
    <property type="entry name" value="Glycine receptor alpha 2 subunit"/>
    <property type="match status" value="1"/>
</dbReference>
<dbReference type="Gene3D" id="2.70.170.10">
    <property type="entry name" value="Neurotransmitter-gated ion-channel ligand-binding domain"/>
    <property type="match status" value="1"/>
</dbReference>
<dbReference type="Gene3D" id="1.20.58.390">
    <property type="entry name" value="Neurotransmitter-gated ion-channel transmembrane domain"/>
    <property type="match status" value="1"/>
</dbReference>
<dbReference type="InterPro" id="IPR006028">
    <property type="entry name" value="GABAA/Glycine_rcpt"/>
</dbReference>
<dbReference type="InterPro" id="IPR008127">
    <property type="entry name" value="Glycine_rcpt_A"/>
</dbReference>
<dbReference type="InterPro" id="IPR008130">
    <property type="entry name" value="Glycine_rcpt_A3"/>
</dbReference>
<dbReference type="InterPro" id="IPR006202">
    <property type="entry name" value="Neur_chan_lig-bd"/>
</dbReference>
<dbReference type="InterPro" id="IPR036734">
    <property type="entry name" value="Neur_chan_lig-bd_sf"/>
</dbReference>
<dbReference type="InterPro" id="IPR006201">
    <property type="entry name" value="Neur_channel"/>
</dbReference>
<dbReference type="InterPro" id="IPR036719">
    <property type="entry name" value="Neuro-gated_channel_TM_sf"/>
</dbReference>
<dbReference type="InterPro" id="IPR038050">
    <property type="entry name" value="Neuro_actylchol_rec"/>
</dbReference>
<dbReference type="InterPro" id="IPR006029">
    <property type="entry name" value="Neurotrans-gated_channel_TM"/>
</dbReference>
<dbReference type="InterPro" id="IPR018000">
    <property type="entry name" value="Neurotransmitter_ion_chnl_CS"/>
</dbReference>
<dbReference type="NCBIfam" id="TIGR00860">
    <property type="entry name" value="LIC"/>
    <property type="match status" value="1"/>
</dbReference>
<dbReference type="PANTHER" id="PTHR18945">
    <property type="entry name" value="NEUROTRANSMITTER GATED ION CHANNEL"/>
    <property type="match status" value="1"/>
</dbReference>
<dbReference type="Pfam" id="PF02931">
    <property type="entry name" value="Neur_chan_LBD"/>
    <property type="match status" value="1"/>
</dbReference>
<dbReference type="Pfam" id="PF02932">
    <property type="entry name" value="Neur_chan_memb"/>
    <property type="match status" value="1"/>
</dbReference>
<dbReference type="PRINTS" id="PR00253">
    <property type="entry name" value="GABAARECEPTR"/>
</dbReference>
<dbReference type="PRINTS" id="PR01673">
    <property type="entry name" value="GLYRALPHA"/>
</dbReference>
<dbReference type="PRINTS" id="PR01676">
    <property type="entry name" value="GLYRALPHA3"/>
</dbReference>
<dbReference type="PRINTS" id="PR00252">
    <property type="entry name" value="NRIONCHANNEL"/>
</dbReference>
<dbReference type="SUPFAM" id="SSF90112">
    <property type="entry name" value="Neurotransmitter-gated ion-channel transmembrane pore"/>
    <property type="match status" value="1"/>
</dbReference>
<dbReference type="SUPFAM" id="SSF63712">
    <property type="entry name" value="Nicotinic receptor ligand binding domain-like"/>
    <property type="match status" value="1"/>
</dbReference>
<dbReference type="PROSITE" id="PS00236">
    <property type="entry name" value="NEUROTR_ION_CHANNEL"/>
    <property type="match status" value="1"/>
</dbReference>
<gene>
    <name type="primary">GLRA3</name>
</gene>
<feature type="signal peptide" evidence="4">
    <location>
        <begin position="1"/>
        <end position="33"/>
    </location>
</feature>
<feature type="chain" id="PRO_0000000419" description="Glycine receptor subunit alpha-3">
    <location>
        <begin position="34"/>
        <end position="464"/>
    </location>
</feature>
<feature type="topological domain" description="Extracellular" evidence="5">
    <location>
        <begin position="34"/>
        <end position="255"/>
    </location>
</feature>
<feature type="transmembrane region" description="Helical; Name=1" evidence="5">
    <location>
        <begin position="256"/>
        <end position="277"/>
    </location>
</feature>
<feature type="topological domain" description="Cytoplasmic" evidence="5">
    <location>
        <begin position="278"/>
        <end position="282"/>
    </location>
</feature>
<feature type="transmembrane region" description="Helical; Name=2" evidence="5">
    <location>
        <begin position="283"/>
        <end position="303"/>
    </location>
</feature>
<feature type="topological domain" description="Extracellular" evidence="5">
    <location>
        <begin position="304"/>
        <end position="314"/>
    </location>
</feature>
<feature type="transmembrane region" description="Helical; Name=3" evidence="5">
    <location>
        <begin position="315"/>
        <end position="335"/>
    </location>
</feature>
<feature type="topological domain" description="Cytoplasmic" evidence="5">
    <location>
        <begin position="336"/>
        <end position="430"/>
    </location>
</feature>
<feature type="transmembrane region" description="Helical; Name=4" evidence="5">
    <location>
        <begin position="431"/>
        <end position="451"/>
    </location>
</feature>
<feature type="topological domain" description="Extracellular" evidence="5">
    <location>
        <begin position="452"/>
        <end position="464"/>
    </location>
</feature>
<feature type="binding site" evidence="1">
    <location>
        <position position="225"/>
    </location>
    <ligand>
        <name>Zn(2+)</name>
        <dbReference type="ChEBI" id="CHEBI:29105"/>
    </ligand>
</feature>
<feature type="binding site" evidence="1">
    <location>
        <position position="227"/>
    </location>
    <ligand>
        <name>Zn(2+)</name>
        <dbReference type="ChEBI" id="CHEBI:29105"/>
    </ligand>
</feature>
<feature type="binding site" evidence="5">
    <location>
        <begin position="235"/>
        <end position="240"/>
    </location>
    <ligand>
        <name>strychnine</name>
        <dbReference type="ChEBI" id="CHEBI:90700"/>
    </ligand>
</feature>
<feature type="binding site" evidence="1">
    <location>
        <position position="248"/>
    </location>
    <ligand>
        <name>Zn(2+)</name>
        <dbReference type="ChEBI" id="CHEBI:29105"/>
    </ligand>
</feature>
<feature type="site" description="Important for obstruction of the ion pore in the closed conformation" evidence="5">
    <location>
        <position position="294"/>
    </location>
</feature>
<feature type="modified residue" description="Phosphoserine" evidence="3">
    <location>
        <position position="370"/>
    </location>
</feature>
<feature type="modified residue" description="Phosphoserine" evidence="3">
    <location>
        <position position="379"/>
    </location>
</feature>
<feature type="glycosylation site" description="N-linked (GlcNAc...) asparagine" evidence="4 5 9">
    <location>
        <position position="71"/>
    </location>
</feature>
<feature type="disulfide bond" evidence="5 9">
    <location>
        <begin position="171"/>
        <end position="185"/>
    </location>
</feature>
<feature type="disulfide bond" evidence="5 9">
    <location>
        <begin position="231"/>
        <end position="242"/>
    </location>
</feature>
<feature type="splice variant" id="VSP_000084" description="In isoform Alpha-3K." evidence="7">
    <location>
        <begin position="358"/>
        <end position="372"/>
    </location>
</feature>
<feature type="sequence conflict" description="In Ref. 1; AAC39919." evidence="8" ref="1">
    <original>H</original>
    <variation>HH</variation>
    <location>
        <position position="460"/>
    </location>
</feature>
<feature type="helix" evidence="12">
    <location>
        <begin position="43"/>
        <end position="50"/>
    </location>
</feature>
<feature type="turn" evidence="12">
    <location>
        <begin position="53"/>
        <end position="56"/>
    </location>
</feature>
<feature type="strand" evidence="12">
    <location>
        <begin position="63"/>
        <end position="68"/>
    </location>
</feature>
<feature type="strand" evidence="12">
    <location>
        <begin position="70"/>
        <end position="85"/>
    </location>
</feature>
<feature type="turn" evidence="12">
    <location>
        <begin position="86"/>
        <end position="89"/>
    </location>
</feature>
<feature type="strand" evidence="12">
    <location>
        <begin position="90"/>
        <end position="102"/>
    </location>
</feature>
<feature type="helix" evidence="12">
    <location>
        <begin position="104"/>
        <end position="106"/>
    </location>
</feature>
<feature type="strand" evidence="12">
    <location>
        <begin position="110"/>
        <end position="112"/>
    </location>
</feature>
<feature type="strand" evidence="12">
    <location>
        <begin position="114"/>
        <end position="118"/>
    </location>
</feature>
<feature type="helix" evidence="12">
    <location>
        <begin position="120"/>
        <end position="125"/>
    </location>
</feature>
<feature type="strand" evidence="12">
    <location>
        <begin position="131"/>
        <end position="133"/>
    </location>
</feature>
<feature type="strand" evidence="12">
    <location>
        <begin position="136"/>
        <end position="141"/>
    </location>
</feature>
<feature type="strand" evidence="12">
    <location>
        <begin position="144"/>
        <end position="146"/>
    </location>
</feature>
<feature type="strand" evidence="12">
    <location>
        <begin position="148"/>
        <end position="154"/>
    </location>
</feature>
<feature type="strand" evidence="12">
    <location>
        <begin position="157"/>
        <end position="170"/>
    </location>
</feature>
<feature type="helix" evidence="12">
    <location>
        <begin position="178"/>
        <end position="180"/>
    </location>
</feature>
<feature type="strand" evidence="12">
    <location>
        <begin position="182"/>
        <end position="193"/>
    </location>
</feature>
<feature type="turn" evidence="12">
    <location>
        <begin position="196"/>
        <end position="198"/>
    </location>
</feature>
<feature type="strand" evidence="12">
    <location>
        <begin position="199"/>
        <end position="203"/>
    </location>
</feature>
<feature type="strand" evidence="12">
    <location>
        <begin position="208"/>
        <end position="211"/>
    </location>
</feature>
<feature type="strand" evidence="11">
    <location>
        <begin position="218"/>
        <end position="222"/>
    </location>
</feature>
<feature type="strand" evidence="12">
    <location>
        <begin position="227"/>
        <end position="230"/>
    </location>
</feature>
<feature type="strand" evidence="11">
    <location>
        <begin position="232"/>
        <end position="235"/>
    </location>
</feature>
<feature type="strand" evidence="10">
    <location>
        <begin position="238"/>
        <end position="240"/>
    </location>
</feature>
<feature type="strand" evidence="12">
    <location>
        <begin position="242"/>
        <end position="250"/>
    </location>
</feature>
<feature type="helix" evidence="12">
    <location>
        <begin position="254"/>
        <end position="259"/>
    </location>
</feature>
<feature type="helix" evidence="12">
    <location>
        <begin position="261"/>
        <end position="272"/>
    </location>
</feature>
<feature type="helix" evidence="12">
    <location>
        <begin position="273"/>
        <end position="276"/>
    </location>
</feature>
<feature type="helix" evidence="12">
    <location>
        <begin position="282"/>
        <end position="303"/>
    </location>
</feature>
<feature type="turn" evidence="13">
    <location>
        <begin position="304"/>
        <end position="306"/>
    </location>
</feature>
<feature type="helix" evidence="12">
    <location>
        <begin position="315"/>
        <end position="341"/>
    </location>
</feature>
<feature type="helix" evidence="12">
    <location>
        <begin position="420"/>
        <end position="452"/>
    </location>
</feature>
<feature type="helix" evidence="11">
    <location>
        <begin position="454"/>
        <end position="456"/>
    </location>
</feature>